<proteinExistence type="inferred from homology"/>
<protein>
    <recommendedName>
        <fullName>Protein PA-X</fullName>
    </recommendedName>
</protein>
<organismHost>
    <name type="scientific">Aves</name>
    <dbReference type="NCBI Taxonomy" id="8782"/>
</organismHost>
<organismHost>
    <name type="scientific">Felis catus</name>
    <name type="common">Cat</name>
    <name type="synonym">Felis silvestris catus</name>
    <dbReference type="NCBI Taxonomy" id="9685"/>
</organismHost>
<organismHost>
    <name type="scientific">Homo sapiens</name>
    <name type="common">Human</name>
    <dbReference type="NCBI Taxonomy" id="9606"/>
</organismHost>
<organismHost>
    <name type="scientific">Panthera pardus</name>
    <name type="common">Leopard</name>
    <name type="synonym">Felis pardus</name>
    <dbReference type="NCBI Taxonomy" id="9691"/>
</organismHost>
<organismHost>
    <name type="scientific">Panthera tigris</name>
    <name type="common">Tiger</name>
    <dbReference type="NCBI Taxonomy" id="9694"/>
</organismHost>
<organismHost>
    <name type="scientific">Sus scrofa</name>
    <name type="common">Pig</name>
    <dbReference type="NCBI Taxonomy" id="9823"/>
</organismHost>
<sequence length="252" mass="29303">MEDFVRQCFNPMIVELAEKTMKEYGEDPKIETNKFAAICTHLEVCFMYSDFHFIDERGESIIVESGDPNALLKHRFEIIEGRDRAMAWTVVNSICNTTGVDKPKFLPDLYDYKENRFTEIGVTRREVHIYYLEKANKIKSEETHIHIFSFTGEEMATKADYTLDEESRARIKTRLFTIRQEMASRGLWDSFVSPREAKRQLKKDLKSQGPCVGLPTKVSHLTSPALKTLEPMWMDLNRTAALRASFLKCRKK</sequence>
<dbReference type="EMBL" id="AF046095">
    <property type="status" value="NOT_ANNOTATED_CDS"/>
    <property type="molecule type" value="Genomic_RNA"/>
</dbReference>
<dbReference type="SMR" id="P0DJR8"/>
<dbReference type="Proteomes" id="UP000008587">
    <property type="component" value="Genome"/>
</dbReference>
<dbReference type="GO" id="GO:0003723">
    <property type="term" value="F:RNA binding"/>
    <property type="evidence" value="ECO:0007669"/>
    <property type="project" value="InterPro"/>
</dbReference>
<dbReference type="GO" id="GO:0039694">
    <property type="term" value="P:viral RNA genome replication"/>
    <property type="evidence" value="ECO:0007669"/>
    <property type="project" value="InterPro"/>
</dbReference>
<dbReference type="GO" id="GO:0075523">
    <property type="term" value="P:viral translational frameshifting"/>
    <property type="evidence" value="ECO:0007669"/>
    <property type="project" value="UniProtKB-KW"/>
</dbReference>
<dbReference type="FunFam" id="3.40.91.90:FF:000001">
    <property type="entry name" value="Polymerase acidic protein"/>
    <property type="match status" value="1"/>
</dbReference>
<dbReference type="Gene3D" id="3.40.91.90">
    <property type="entry name" value="Influenza RNA-dependent RNA polymerase subunit PA, endonuclease domain"/>
    <property type="match status" value="1"/>
</dbReference>
<dbReference type="InterPro" id="IPR001009">
    <property type="entry name" value="PA/PA-X"/>
</dbReference>
<dbReference type="InterPro" id="IPR038372">
    <property type="entry name" value="PA/PA-X_sf"/>
</dbReference>
<dbReference type="Pfam" id="PF00603">
    <property type="entry name" value="Flu_PA"/>
    <property type="match status" value="1"/>
</dbReference>
<evidence type="ECO:0000250" key="1">
    <source>
        <dbReference type="UniProtKB" id="P0CK64"/>
    </source>
</evidence>
<evidence type="ECO:0000250" key="2">
    <source>
        <dbReference type="UniProtKB" id="P0CK68"/>
    </source>
</evidence>
<evidence type="ECO:0000250" key="3">
    <source>
        <dbReference type="UniProtKB" id="P0DJW8"/>
    </source>
</evidence>
<evidence type="ECO:0000250" key="4">
    <source>
        <dbReference type="UniProtKB" id="P0DXO5"/>
    </source>
</evidence>
<evidence type="ECO:0000305" key="5"/>
<organism>
    <name type="scientific">Influenza A virus (strain A/Hong Kong/156/1997 H5N1 genotype Gs/Gd)</name>
    <dbReference type="NCBI Taxonomy" id="130763"/>
    <lineage>
        <taxon>Viruses</taxon>
        <taxon>Riboviria</taxon>
        <taxon>Orthornavirae</taxon>
        <taxon>Negarnaviricota</taxon>
        <taxon>Polyploviricotina</taxon>
        <taxon>Insthoviricetes</taxon>
        <taxon>Articulavirales</taxon>
        <taxon>Orthomyxoviridae</taxon>
        <taxon>Alphainfluenzavirus</taxon>
        <taxon>Alphainfluenzavirus influenzae</taxon>
        <taxon>Influenza A virus</taxon>
    </lineage>
</organism>
<comment type="function">
    <text evidence="1 4">Plays a major role in the shutoff of the host protein expression by cleaving mRNAs probably via an endonuclease activity. This host shutoff allows the virus to escape from the host antiviral response (By similarity). Hijacks host RNA splicing machinery to selectively target host RNAs containing introns for destruction. This may explain the preferential degradation of RNAs that have undergone co- or post-transcriptional processing (By similarity).</text>
</comment>
<comment type="subcellular location">
    <subcellularLocation>
        <location evidence="4">Host cytoplasm</location>
    </subcellularLocation>
    <subcellularLocation>
        <location evidence="4">Host nucleus</location>
    </subcellularLocation>
</comment>
<comment type="alternative products">
    <event type="ribosomal frameshifting"/>
    <isoform>
        <id>P0DJR8-1</id>
        <name>PA-X</name>
        <sequence type="displayed"/>
    </isoform>
    <isoform>
        <id>O89752-1</id>
        <name>PA</name>
        <sequence type="external"/>
    </isoform>
</comment>
<comment type="domain">
    <text evidence="1 4">The probable endonuclease active site in the N-terminus and the basic amino acid cluster in the C-terminus are important for the shutoff activity. The C-terminus acts as a nuclear localization signal (By similarity). The C-terminus is recruited to host protein complexes involved in nuclear Pol II RNA processing (By similarity).</text>
</comment>
<comment type="similarity">
    <text evidence="5">Belongs to the influenza viruses PA-X family.</text>
</comment>
<keyword id="KW-1132">Decay of host mRNAs by virus</keyword>
<keyword id="KW-1262">Eukaryotic host gene expression shutoff by virus</keyword>
<keyword id="KW-1035">Host cytoplasm</keyword>
<keyword id="KW-1190">Host gene expression shutoff by virus</keyword>
<keyword id="KW-1192">Host mRNA suppression by virus</keyword>
<keyword id="KW-1048">Host nucleus</keyword>
<keyword id="KW-0945">Host-virus interaction</keyword>
<keyword id="KW-0688">Ribosomal frameshifting</keyword>
<gene>
    <name type="primary">PA</name>
</gene>
<feature type="chain" id="PRO_0000419381" description="Protein PA-X">
    <location>
        <begin position="1"/>
        <end position="252"/>
    </location>
</feature>
<feature type="active site" evidence="2">
    <location>
        <position position="80"/>
    </location>
</feature>
<feature type="active site" evidence="2">
    <location>
        <position position="108"/>
    </location>
</feature>
<feature type="site" description="Important for efficient shutoff activity and nuclear localization" evidence="4">
    <location>
        <position position="195"/>
    </location>
</feature>
<feature type="site" description="Important for efficient shutoff activity and nuclear localization" evidence="4">
    <location>
        <position position="198"/>
    </location>
</feature>
<feature type="site" description="Important for efficient shutoff activity and nuclear localization" evidence="4">
    <location>
        <position position="199"/>
    </location>
</feature>
<feature type="site" description="Important for efficient shutoff activity" evidence="3">
    <location>
        <position position="202"/>
    </location>
</feature>
<feature type="site" description="Important for efficient shutoff activity" evidence="3">
    <location>
        <position position="203"/>
    </location>
</feature>
<feature type="site" description="Important for efficient shutoff activity" evidence="3">
    <location>
        <position position="206"/>
    </location>
</feature>
<name>PAX_I97A1</name>
<reference key="1">
    <citation type="journal article" date="1998" name="J. Virol.">
        <title>Comparisons of highly virulent H5N1 influenza A viruses isolated from humans and chickens from Hong Kong.</title>
        <authorList>
            <person name="Suarez D.L."/>
            <person name="Perdue M.L."/>
            <person name="Cox N."/>
            <person name="Rowe T."/>
            <person name="Bender C."/>
            <person name="Huang J."/>
            <person name="Swayne D.E."/>
        </authorList>
    </citation>
    <scope>NUCLEOTIDE SEQUENCE [GENOMIC RNA]</scope>
</reference>
<accession>P0DJR8</accession>